<proteinExistence type="inferred from homology"/>
<name>FLGI_HELPG</name>
<organism>
    <name type="scientific">Helicobacter pylori (strain G27)</name>
    <dbReference type="NCBI Taxonomy" id="563041"/>
    <lineage>
        <taxon>Bacteria</taxon>
        <taxon>Pseudomonadati</taxon>
        <taxon>Campylobacterota</taxon>
        <taxon>Epsilonproteobacteria</taxon>
        <taxon>Campylobacterales</taxon>
        <taxon>Helicobacteraceae</taxon>
        <taxon>Helicobacter</taxon>
    </lineage>
</organism>
<dbReference type="EMBL" id="CP001173">
    <property type="protein sequence ID" value="ACI26993.1"/>
    <property type="molecule type" value="Genomic_DNA"/>
</dbReference>
<dbReference type="RefSeq" id="WP_000832056.1">
    <property type="nucleotide sequence ID" value="NC_011333.1"/>
</dbReference>
<dbReference type="SMR" id="B5ZA13"/>
<dbReference type="KEGG" id="hpg:HPG27_226"/>
<dbReference type="HOGENOM" id="CLU_045235_1_0_7"/>
<dbReference type="Proteomes" id="UP000001735">
    <property type="component" value="Chromosome"/>
</dbReference>
<dbReference type="GO" id="GO:0009428">
    <property type="term" value="C:bacterial-type flagellum basal body, distal rod, P ring"/>
    <property type="evidence" value="ECO:0007669"/>
    <property type="project" value="InterPro"/>
</dbReference>
<dbReference type="GO" id="GO:0030288">
    <property type="term" value="C:outer membrane-bounded periplasmic space"/>
    <property type="evidence" value="ECO:0007669"/>
    <property type="project" value="InterPro"/>
</dbReference>
<dbReference type="GO" id="GO:0005198">
    <property type="term" value="F:structural molecule activity"/>
    <property type="evidence" value="ECO:0007669"/>
    <property type="project" value="InterPro"/>
</dbReference>
<dbReference type="GO" id="GO:0071973">
    <property type="term" value="P:bacterial-type flagellum-dependent cell motility"/>
    <property type="evidence" value="ECO:0007669"/>
    <property type="project" value="InterPro"/>
</dbReference>
<dbReference type="HAMAP" id="MF_00416">
    <property type="entry name" value="FlgI"/>
    <property type="match status" value="1"/>
</dbReference>
<dbReference type="InterPro" id="IPR001782">
    <property type="entry name" value="Flag_FlgI"/>
</dbReference>
<dbReference type="NCBIfam" id="NF003676">
    <property type="entry name" value="PRK05303.1"/>
    <property type="match status" value="1"/>
</dbReference>
<dbReference type="PANTHER" id="PTHR30381">
    <property type="entry name" value="FLAGELLAR P-RING PERIPLASMIC PROTEIN FLGI"/>
    <property type="match status" value="1"/>
</dbReference>
<dbReference type="PANTHER" id="PTHR30381:SF0">
    <property type="entry name" value="FLAGELLAR P-RING PROTEIN"/>
    <property type="match status" value="1"/>
</dbReference>
<dbReference type="Pfam" id="PF02119">
    <property type="entry name" value="FlgI"/>
    <property type="match status" value="1"/>
</dbReference>
<dbReference type="PRINTS" id="PR01010">
    <property type="entry name" value="FLGPRINGFLGI"/>
</dbReference>
<gene>
    <name evidence="1" type="primary">flgI</name>
    <name type="ordered locus">HPG27_226</name>
</gene>
<feature type="signal peptide" evidence="1">
    <location>
        <begin position="1"/>
        <end position="19"/>
    </location>
</feature>
<feature type="chain" id="PRO_1000123975" description="Flagellar P-ring protein">
    <location>
        <begin position="20"/>
        <end position="342"/>
    </location>
</feature>
<accession>B5ZA13</accession>
<keyword id="KW-0975">Bacterial flagellum</keyword>
<keyword id="KW-0574">Periplasm</keyword>
<keyword id="KW-1185">Reference proteome</keyword>
<keyword id="KW-0732">Signal</keyword>
<sequence length="342" mass="36669">MKRVFLWLIFVLAFHKLLAEKIGDIASVVGVRDNQLIGYGLVIGLNGTGDKSGSKFTMQSISNMLESVNVKISADDIKSKNVAAVMITASLPPFARQGDKIDIHISSIGDAKSIQGGTLVMTPLNAVDGNIYALAQGAITSGNSNNLLSANIINGATIEREVSYDLFHKNAMTLSLKNPNFKNAIQVQNTLNKVFGNKVAIALDPKTIQITRPERFSMVEFLALVQEIPINYSAKNKIIVDEKSGTIVSGVDIIVHPIVVTSQDITLKITKEPLNDSKNTQDLDNNMSLDTAHNTLSSNGKNITIAGVVKALQKIGVSAKGMVSILQALKKSGAISAEMEIL</sequence>
<protein>
    <recommendedName>
        <fullName evidence="1">Flagellar P-ring protein</fullName>
    </recommendedName>
    <alternativeName>
        <fullName evidence="1">Basal body P-ring protein</fullName>
    </alternativeName>
</protein>
<comment type="function">
    <text evidence="1">Assembles around the rod to form the L-ring and probably protects the motor/basal body from shearing forces during rotation.</text>
</comment>
<comment type="subunit">
    <text evidence="1">The basal body constitutes a major portion of the flagellar organelle and consists of four rings (L,P,S, and M) mounted on a central rod.</text>
</comment>
<comment type="subcellular location">
    <subcellularLocation>
        <location evidence="1">Periplasm</location>
    </subcellularLocation>
    <subcellularLocation>
        <location evidence="1">Bacterial flagellum basal body</location>
    </subcellularLocation>
</comment>
<comment type="similarity">
    <text evidence="1">Belongs to the FlgI family.</text>
</comment>
<reference key="1">
    <citation type="journal article" date="2009" name="J. Bacteriol.">
        <title>The complete genome sequence of Helicobacter pylori strain G27.</title>
        <authorList>
            <person name="Baltrus D.A."/>
            <person name="Amieva M.R."/>
            <person name="Covacci A."/>
            <person name="Lowe T.M."/>
            <person name="Merrell D.S."/>
            <person name="Ottemann K.M."/>
            <person name="Stein M."/>
            <person name="Salama N.R."/>
            <person name="Guillemin K."/>
        </authorList>
    </citation>
    <scope>NUCLEOTIDE SEQUENCE [LARGE SCALE GENOMIC DNA]</scope>
    <source>
        <strain>G27</strain>
    </source>
</reference>
<evidence type="ECO:0000255" key="1">
    <source>
        <dbReference type="HAMAP-Rule" id="MF_00416"/>
    </source>
</evidence>